<sequence length="292" mass="32762">MRGVIVPIVTPFKEDYSIDVPALEEHLDYLQKVGVHGIFINATTGEFTSLSKEERRFLAEKGRELVTSAFYLVGTASSNTLEVIELTKHAQDIGADYAVIAPPYYCPLTEEALFRHYSMIAEKTDIPIILYNIPACANSLSVPLVKRLTIEYPSIAGIKATLDSVNYIRDIILDVKGERKDFRVFTGLDQHFLNTLILGGDGGIMACANFAPELHLRLYKAFNEKRFEEAFEYSRKLAKLSKVYDIASSFGSAIKLAMRVRGFSIKPVLRPPYTMDGKEVEEKVRALLLEVL</sequence>
<name>DAPAL_THEKO</name>
<comment type="subunit">
    <text evidence="1">Homotetramer.</text>
</comment>
<comment type="subcellular location">
    <subcellularLocation>
        <location evidence="2">Cytoplasm</location>
    </subcellularLocation>
</comment>
<comment type="similarity">
    <text evidence="2">Belongs to the DapA family.</text>
</comment>
<keyword id="KW-0963">Cytoplasm</keyword>
<keyword id="KW-0456">Lyase</keyword>
<keyword id="KW-1185">Reference proteome</keyword>
<keyword id="KW-0704">Schiff base</keyword>
<gene>
    <name type="primary">dapAL</name>
    <name type="ordered locus">TK1237</name>
</gene>
<proteinExistence type="inferred from homology"/>
<feature type="chain" id="PRO_0000103206" description="Uncharacterized DapA-like lyase TK1237">
    <location>
        <begin position="1"/>
        <end position="292"/>
    </location>
</feature>
<feature type="active site" description="Charge relay system" evidence="1">
    <location>
        <position position="43"/>
    </location>
</feature>
<feature type="active site" description="Charge relay system" evidence="1">
    <location>
        <position position="105"/>
    </location>
</feature>
<feature type="active site" description="Proton donor" evidence="1">
    <location>
        <position position="131"/>
    </location>
</feature>
<feature type="active site" description="Schiff-base intermediate with substrate" evidence="1">
    <location>
        <position position="159"/>
    </location>
</feature>
<reference key="1">
    <citation type="journal article" date="2005" name="Genome Res.">
        <title>Complete genome sequence of the hyperthermophilic archaeon Thermococcus kodakaraensis KOD1 and comparison with Pyrococcus genomes.</title>
        <authorList>
            <person name="Fukui T."/>
            <person name="Atomi H."/>
            <person name="Kanai T."/>
            <person name="Matsumi R."/>
            <person name="Fujiwara S."/>
            <person name="Imanaka T."/>
        </authorList>
    </citation>
    <scope>NUCLEOTIDE SEQUENCE [LARGE SCALE GENOMIC DNA]</scope>
    <source>
        <strain>ATCC BAA-918 / JCM 12380 / KOD1</strain>
    </source>
</reference>
<accession>Q5JGK8</accession>
<organism>
    <name type="scientific">Thermococcus kodakarensis (strain ATCC BAA-918 / JCM 12380 / KOD1)</name>
    <name type="common">Pyrococcus kodakaraensis (strain KOD1)</name>
    <dbReference type="NCBI Taxonomy" id="69014"/>
    <lineage>
        <taxon>Archaea</taxon>
        <taxon>Methanobacteriati</taxon>
        <taxon>Methanobacteriota</taxon>
        <taxon>Thermococci</taxon>
        <taxon>Thermococcales</taxon>
        <taxon>Thermococcaceae</taxon>
        <taxon>Thermococcus</taxon>
    </lineage>
</organism>
<evidence type="ECO:0000250" key="1"/>
<evidence type="ECO:0000305" key="2"/>
<dbReference type="EC" id="4.-.-.-"/>
<dbReference type="EMBL" id="AP006878">
    <property type="protein sequence ID" value="BAD85426.1"/>
    <property type="molecule type" value="Genomic_DNA"/>
</dbReference>
<dbReference type="RefSeq" id="WP_011250188.1">
    <property type="nucleotide sequence ID" value="NC_006624.1"/>
</dbReference>
<dbReference type="SMR" id="Q5JGK8"/>
<dbReference type="FunCoup" id="Q5JGK8">
    <property type="interactions" value="101"/>
</dbReference>
<dbReference type="STRING" id="69014.TK1237"/>
<dbReference type="EnsemblBacteria" id="BAD85426">
    <property type="protein sequence ID" value="BAD85426"/>
    <property type="gene ID" value="TK1237"/>
</dbReference>
<dbReference type="GeneID" id="78447753"/>
<dbReference type="KEGG" id="tko:TK1237"/>
<dbReference type="PATRIC" id="fig|69014.16.peg.1211"/>
<dbReference type="eggNOG" id="arCOG04172">
    <property type="taxonomic scope" value="Archaea"/>
</dbReference>
<dbReference type="HOGENOM" id="CLU_049343_5_1_2"/>
<dbReference type="InParanoid" id="Q5JGK8"/>
<dbReference type="OrthoDB" id="33636at2157"/>
<dbReference type="PhylomeDB" id="Q5JGK8"/>
<dbReference type="Proteomes" id="UP000000536">
    <property type="component" value="Chromosome"/>
</dbReference>
<dbReference type="GO" id="GO:0005737">
    <property type="term" value="C:cytoplasm"/>
    <property type="evidence" value="ECO:0007669"/>
    <property type="project" value="UniProtKB-SubCell"/>
</dbReference>
<dbReference type="GO" id="GO:0008675">
    <property type="term" value="F:2-dehydro-3-deoxy-phosphogluconate aldolase activity"/>
    <property type="evidence" value="ECO:0007669"/>
    <property type="project" value="UniProtKB-ARBA"/>
</dbReference>
<dbReference type="GO" id="GO:0008840">
    <property type="term" value="F:4-hydroxy-tetrahydrodipicolinate synthase activity"/>
    <property type="evidence" value="ECO:0000318"/>
    <property type="project" value="GO_Central"/>
</dbReference>
<dbReference type="GO" id="GO:0044281">
    <property type="term" value="P:small molecule metabolic process"/>
    <property type="evidence" value="ECO:0007669"/>
    <property type="project" value="UniProtKB-ARBA"/>
</dbReference>
<dbReference type="CDD" id="cd00408">
    <property type="entry name" value="DHDPS-like"/>
    <property type="match status" value="1"/>
</dbReference>
<dbReference type="Gene3D" id="3.20.20.70">
    <property type="entry name" value="Aldolase class I"/>
    <property type="match status" value="1"/>
</dbReference>
<dbReference type="InterPro" id="IPR013785">
    <property type="entry name" value="Aldolase_TIM"/>
</dbReference>
<dbReference type="InterPro" id="IPR002220">
    <property type="entry name" value="DapA-like"/>
</dbReference>
<dbReference type="InterPro" id="IPR020625">
    <property type="entry name" value="Schiff_base-form_aldolases_AS"/>
</dbReference>
<dbReference type="PANTHER" id="PTHR12128:SF66">
    <property type="entry name" value="4-HYDROXY-2-OXOGLUTARATE ALDOLASE, MITOCHONDRIAL"/>
    <property type="match status" value="1"/>
</dbReference>
<dbReference type="PANTHER" id="PTHR12128">
    <property type="entry name" value="DIHYDRODIPICOLINATE SYNTHASE"/>
    <property type="match status" value="1"/>
</dbReference>
<dbReference type="Pfam" id="PF00701">
    <property type="entry name" value="DHDPS"/>
    <property type="match status" value="1"/>
</dbReference>
<dbReference type="PIRSF" id="PIRSF001365">
    <property type="entry name" value="DHDPS"/>
    <property type="match status" value="1"/>
</dbReference>
<dbReference type="PRINTS" id="PR00146">
    <property type="entry name" value="DHPICSNTHASE"/>
</dbReference>
<dbReference type="SMART" id="SM01130">
    <property type="entry name" value="DHDPS"/>
    <property type="match status" value="1"/>
</dbReference>
<dbReference type="SUPFAM" id="SSF51569">
    <property type="entry name" value="Aldolase"/>
    <property type="match status" value="1"/>
</dbReference>
<dbReference type="PROSITE" id="PS00666">
    <property type="entry name" value="DHDPS_2"/>
    <property type="match status" value="1"/>
</dbReference>
<protein>
    <recommendedName>
        <fullName>Uncharacterized DapA-like lyase TK1237</fullName>
        <ecNumber>4.-.-.-</ecNumber>
    </recommendedName>
</protein>